<gene>
    <name evidence="7 8" type="primary">PROSCOOP1</name>
    <name evidence="7 8" type="synonym">SCOOP1</name>
    <name evidence="11" type="ordered locus">At5g44565</name>
    <name evidence="12" type="ORF">K15C23</name>
</gene>
<organism>
    <name type="scientific">Arabidopsis thaliana</name>
    <name type="common">Mouse-ear cress</name>
    <dbReference type="NCBI Taxonomy" id="3702"/>
    <lineage>
        <taxon>Eukaryota</taxon>
        <taxon>Viridiplantae</taxon>
        <taxon>Streptophyta</taxon>
        <taxon>Embryophyta</taxon>
        <taxon>Tracheophyta</taxon>
        <taxon>Spermatophyta</taxon>
        <taxon>Magnoliopsida</taxon>
        <taxon>eudicotyledons</taxon>
        <taxon>Gunneridae</taxon>
        <taxon>Pentapetalae</taxon>
        <taxon>rosids</taxon>
        <taxon>malvids</taxon>
        <taxon>Brassicales</taxon>
        <taxon>Brassicaceae</taxon>
        <taxon>Camelineae</taxon>
        <taxon>Arabidopsis</taxon>
    </lineage>
</organism>
<reference key="1">
    <citation type="submission" date="1999-02" db="EMBL/GenBank/DDBJ databases">
        <title>Structural analysis of Arabidopsis thaliana chromosome 5. XI.</title>
        <authorList>
            <person name="Kaneko T."/>
            <person name="Katoh T."/>
            <person name="Asamizu E."/>
            <person name="Sato S."/>
            <person name="Nakamura Y."/>
            <person name="Kotani H."/>
            <person name="Tabata S."/>
        </authorList>
    </citation>
    <scope>NUCLEOTIDE SEQUENCE [LARGE SCALE GENOMIC DNA]</scope>
    <source>
        <strain>cv. Columbia</strain>
    </source>
</reference>
<reference key="2">
    <citation type="journal article" date="2017" name="Plant J.">
        <title>Araport11: a complete reannotation of the Arabidopsis thaliana reference genome.</title>
        <authorList>
            <person name="Cheng C.Y."/>
            <person name="Krishnakumar V."/>
            <person name="Chan A.P."/>
            <person name="Thibaud-Nissen F."/>
            <person name="Schobel S."/>
            <person name="Town C.D."/>
        </authorList>
    </citation>
    <scope>GENOME REANNOTATION</scope>
    <source>
        <strain>cv. Columbia</strain>
    </source>
</reference>
<reference key="3">
    <citation type="submission" date="2006-08" db="EMBL/GenBank/DDBJ databases">
        <title>Arabidopsis ORF Clones.</title>
        <authorList>
            <person name="Quinitio C."/>
            <person name="Chen H."/>
            <person name="Kim C.J."/>
            <person name="Shinn P."/>
            <person name="Ecker J.R."/>
        </authorList>
    </citation>
    <scope>NUCLEOTIDE SEQUENCE [LARGE SCALE MRNA]</scope>
    <source>
        <strain>cv. Columbia</strain>
    </source>
</reference>
<reference key="4">
    <citation type="journal article" date="2019" name="J. Exp. Bot.">
        <title>The SCOOP12 peptide regulates defense response and root elongation in Arabidopsis thaliana.</title>
        <authorList>
            <person name="Gully K."/>
            <person name="Pelletier S."/>
            <person name="Guillou M.-C."/>
            <person name="Ferrand M."/>
            <person name="Aligon S."/>
            <person name="Pokotylo I."/>
            <person name="Perrin A."/>
            <person name="Vergne E."/>
            <person name="Fagard M."/>
            <person name="Ruelland E."/>
            <person name="Grappin P."/>
            <person name="Bucher E."/>
            <person name="Renou J.-P."/>
            <person name="Aubourg S."/>
        </authorList>
    </citation>
    <scope>GENE FAMILY</scope>
    <source>
        <strain>cv. Columbia</strain>
        <strain>cv. Wassilewskija</strain>
    </source>
</reference>
<reference key="5">
    <citation type="journal article" date="2021" name="Nat. Commun.">
        <title>Perception of a divergent family of phytocytokines by the Arabidopsis receptor kinase MIK2.</title>
        <authorList>
            <person name="Rhodes J."/>
            <person name="Yang H."/>
            <person name="Moussu S."/>
            <person name="Boutrot F."/>
            <person name="Santiago J."/>
            <person name="Zipfel C."/>
        </authorList>
    </citation>
    <scope>FUNCTION</scope>
    <scope>GENE FAMILY</scope>
    <source>
        <strain>cv. Columbia</strain>
        <strain>cv. Wassilewskija-2</strain>
    </source>
</reference>
<reference key="6">
    <citation type="journal article" date="2021" name="Nat. Commun.">
        <title>The Arabidopsis MIK2 receptor elicits immunity by sensing a conserved signature from phytocytokines and microbes.</title>
        <authorList>
            <person name="Hou S."/>
            <person name="Liu D."/>
            <person name="Huang S."/>
            <person name="Luo D."/>
            <person name="Liu Z."/>
            <person name="Xiang Q."/>
            <person name="Wang P."/>
            <person name="Mu R."/>
            <person name="Han Z."/>
            <person name="Chen S."/>
            <person name="Chai J."/>
            <person name="Shan L."/>
            <person name="He P."/>
        </authorList>
    </citation>
    <scope>TISSUE SPECIFICITY</scope>
    <scope>GENE FAMILY</scope>
    <scope>NOMENCLATURE</scope>
    <source>
        <strain>cv. Columbia</strain>
    </source>
</reference>
<reference key="7">
    <citation type="journal article" date="2022" name="Front. Plant Sci.">
        <title>The MIK2/SCOOP signaling system contributes to Arabidopsis resistance against herbivory by modulating jasmonate and indole glucosinolate biosynthesis.</title>
        <authorList>
            <person name="Stahl E."/>
            <person name="Fernandez Martin A."/>
            <person name="Glauser G."/>
            <person name="Guillou M.-C."/>
            <person name="Aubourg S."/>
            <person name="Renou J.-P."/>
            <person name="Reymond P."/>
        </authorList>
    </citation>
    <scope>INDUCTION BY INSECT HERBIVORY</scope>
    <source>
        <strain>cv. Columbia</strain>
        <strain>cv. Wassilewskija</strain>
    </source>
</reference>
<dbReference type="EMBL" id="AB024024">
    <property type="status" value="NOT_ANNOTATED_CDS"/>
    <property type="molecule type" value="Genomic_DNA"/>
</dbReference>
<dbReference type="EMBL" id="CP002688">
    <property type="protein sequence ID" value="AED95125.1"/>
    <property type="molecule type" value="Genomic_DNA"/>
</dbReference>
<dbReference type="EMBL" id="BT026395">
    <property type="protein sequence ID" value="ABH04502.1"/>
    <property type="molecule type" value="mRNA"/>
</dbReference>
<dbReference type="RefSeq" id="NP_974882.1">
    <property type="nucleotide sequence ID" value="NM_203153.2"/>
</dbReference>
<dbReference type="FunCoup" id="Q3E8H4">
    <property type="interactions" value="2"/>
</dbReference>
<dbReference type="IntAct" id="Q3E8H4">
    <property type="interactions" value="2"/>
</dbReference>
<dbReference type="PaxDb" id="3702-AT5G44565.1"/>
<dbReference type="EnsemblPlants" id="AT5G44565.1">
    <property type="protein sequence ID" value="AT5G44565.1"/>
    <property type="gene ID" value="AT5G44565"/>
</dbReference>
<dbReference type="GeneID" id="2746190"/>
<dbReference type="Gramene" id="AT5G44565.1">
    <property type="protein sequence ID" value="AT5G44565.1"/>
    <property type="gene ID" value="AT5G44565"/>
</dbReference>
<dbReference type="KEGG" id="ath:AT5G44565"/>
<dbReference type="Araport" id="AT5G44565"/>
<dbReference type="TAIR" id="AT5G44565"/>
<dbReference type="HOGENOM" id="CLU_2708229_0_0_1"/>
<dbReference type="PRO" id="PR:Q3E8H4"/>
<dbReference type="Proteomes" id="UP000006548">
    <property type="component" value="Chromosome 5"/>
</dbReference>
<dbReference type="ExpressionAtlas" id="Q3E8H4">
    <property type="expression patterns" value="baseline and differential"/>
</dbReference>
<dbReference type="GO" id="GO:0048046">
    <property type="term" value="C:apoplast"/>
    <property type="evidence" value="ECO:0000250"/>
    <property type="project" value="UniProtKB"/>
</dbReference>
<dbReference type="GO" id="GO:0005886">
    <property type="term" value="C:plasma membrane"/>
    <property type="evidence" value="ECO:0007669"/>
    <property type="project" value="UniProtKB-SubCell"/>
</dbReference>
<dbReference type="GO" id="GO:0030275">
    <property type="term" value="F:LRR domain binding"/>
    <property type="evidence" value="ECO:0000250"/>
    <property type="project" value="UniProtKB"/>
</dbReference>
<dbReference type="GO" id="GO:0033612">
    <property type="term" value="F:receptor serine/threonine kinase binding"/>
    <property type="evidence" value="ECO:0000250"/>
    <property type="project" value="UniProtKB"/>
</dbReference>
<dbReference type="GO" id="GO:0009625">
    <property type="term" value="P:response to insect"/>
    <property type="evidence" value="ECO:0000270"/>
    <property type="project" value="UniProtKB"/>
</dbReference>
<dbReference type="GO" id="GO:0009611">
    <property type="term" value="P:response to wounding"/>
    <property type="evidence" value="ECO:0000270"/>
    <property type="project" value="UniProtKB"/>
</dbReference>
<accession>Q3E8H4</accession>
<sequence length="73" mass="7769">MGMSGSSGLVHVLMLLLLLSILFHHTESTLPSDSEQLSITGRRMMANYKPNTAVETPPSRSRRGGGGQNTGAD</sequence>
<protein>
    <recommendedName>
        <fullName evidence="7 8">Serine rich endogenous peptide 1</fullName>
        <shortName evidence="7 8">AtSCOOP1</shortName>
    </recommendedName>
    <alternativeName>
        <fullName evidence="7 8">Phytocytokine SCOOP1</fullName>
    </alternativeName>
    <alternativeName>
        <fullName evidence="7 8">Precursor of serine rich endogenous peptide phytocytokine 1</fullName>
    </alternativeName>
</protein>
<name>SCOP1_ARATH</name>
<keyword id="KW-0052">Apoplast</keyword>
<keyword id="KW-1003">Cell membrane</keyword>
<keyword id="KW-0165">Cleavage on pair of basic residues</keyword>
<keyword id="KW-0472">Membrane</keyword>
<keyword id="KW-1185">Reference proteome</keyword>
<keyword id="KW-0964">Secreted</keyword>
<keyword id="KW-0732">Signal</keyword>
<comment type="function">
    <text evidence="4">Brassicaceae-specific phytocytokine (plant endogenous peptide released into the apoplast) perceived by MIK2 in a BAK1/SERK3 and SERK4 coreceptors-dependent manner, that modulates various physiological and antimicrobial processes including growth prevention and reactive oxygen species (ROS) response regulation.</text>
</comment>
<comment type="subunit">
    <text evidence="1">Interacts with MIK2 (via extracellular leucine-rich repeat domain); this interaction triggers the formation of complex between MIK2 and the BAK1/SERK3 and SERK4 coreceptors, and subsequent BAK1 activation by phosphorylation.</text>
</comment>
<comment type="subcellular location">
    <subcellularLocation>
        <location evidence="1">Cell membrane</location>
    </subcellularLocation>
    <subcellularLocation>
        <location evidence="1">Secreted</location>
        <location evidence="1">Extracellular space</location>
        <location evidence="1">Apoplast</location>
    </subcellularLocation>
    <text evidence="1">The precursor of SCOOP1, PROSCOOP1, accumulates at the plasma membrane and is proteolytically cleaved to release the SCOOP1 in the apoplasm.</text>
</comment>
<comment type="tissue specificity">
    <text evidence="5">Mostly expressed in leaves and flowers, and, to a lower extent, in seedlings shoots.</text>
</comment>
<comment type="induction">
    <text evidence="6">Accumulates upon infection by generalist herbivores such as Spodoptera littoralis.</text>
</comment>
<comment type="similarity">
    <text evidence="9">Belongs to the serine rich endogenous peptide (SCOOP) phytocytokine family.</text>
</comment>
<feature type="signal peptide" evidence="2">
    <location>
        <begin position="1"/>
        <end position="28"/>
    </location>
</feature>
<feature type="propeptide" id="PRO_0000457214" description="Removed in mature form" evidence="1">
    <location>
        <begin position="29"/>
        <end status="unknown"/>
    </location>
</feature>
<feature type="peptide" id="PRO_0000457215" description="Serine rich endogenous peptide 1" evidence="1">
    <location>
        <begin status="unknown"/>
        <end position="73"/>
    </location>
</feature>
<feature type="region of interest" description="Disordered" evidence="3">
    <location>
        <begin position="48"/>
        <end position="73"/>
    </location>
</feature>
<feature type="short sequence motif" description="SCOOP motif" evidence="10">
    <location>
        <begin position="53"/>
        <end position="67"/>
    </location>
</feature>
<feature type="short sequence motif" description="SxS motif essential for MIK2 binding" evidence="1">
    <location>
        <begin position="59"/>
        <end position="61"/>
    </location>
</feature>
<feature type="compositionally biased region" description="Gly residues" evidence="3">
    <location>
        <begin position="64"/>
        <end position="73"/>
    </location>
</feature>
<evidence type="ECO:0000250" key="1">
    <source>
        <dbReference type="UniProtKB" id="B3H7I1"/>
    </source>
</evidence>
<evidence type="ECO:0000255" key="2"/>
<evidence type="ECO:0000256" key="3">
    <source>
        <dbReference type="SAM" id="MobiDB-lite"/>
    </source>
</evidence>
<evidence type="ECO:0000269" key="4">
    <source>
    </source>
</evidence>
<evidence type="ECO:0000269" key="5">
    <source>
    </source>
</evidence>
<evidence type="ECO:0000269" key="6">
    <source>
    </source>
</evidence>
<evidence type="ECO:0000303" key="7">
    <source>
    </source>
</evidence>
<evidence type="ECO:0000303" key="8">
    <source>
    </source>
</evidence>
<evidence type="ECO:0000305" key="9"/>
<evidence type="ECO:0000305" key="10">
    <source>
    </source>
</evidence>
<evidence type="ECO:0000312" key="11">
    <source>
        <dbReference type="Araport" id="AT5G44565"/>
    </source>
</evidence>
<evidence type="ECO:0000312" key="12">
    <source>
        <dbReference type="EMBL" id="AB024024"/>
    </source>
</evidence>
<proteinExistence type="evidence at transcript level"/>